<gene>
    <name evidence="4" type="primary">Ctl2</name>
    <name evidence="4" type="ORF">CG11880</name>
</gene>
<protein>
    <recommendedName>
        <fullName evidence="4">Choline transporter-like 2</fullName>
    </recommendedName>
</protein>
<comment type="subcellular location">
    <subcellularLocation>
        <location evidence="1">Membrane</location>
        <topology evidence="1">Multi-pass membrane protein</topology>
    </subcellularLocation>
</comment>
<comment type="similarity">
    <text evidence="3">Belongs to the CTL (choline transporter-like) family.</text>
</comment>
<feature type="chain" id="PRO_0000359734" description="Choline transporter-like 2">
    <location>
        <begin position="1"/>
        <end position="796"/>
    </location>
</feature>
<feature type="transmembrane region" description="Helical" evidence="2">
    <location>
        <begin position="35"/>
        <end position="55"/>
    </location>
</feature>
<feature type="transmembrane region" description="Helical" evidence="2">
    <location>
        <begin position="304"/>
        <end position="324"/>
    </location>
</feature>
<feature type="transmembrane region" description="Helical" evidence="2">
    <location>
        <begin position="332"/>
        <end position="352"/>
    </location>
</feature>
<feature type="transmembrane region" description="Helical" evidence="2">
    <location>
        <begin position="386"/>
        <end position="406"/>
    </location>
</feature>
<feature type="transmembrane region" description="Helical" evidence="2">
    <location>
        <begin position="431"/>
        <end position="451"/>
    </location>
</feature>
<feature type="transmembrane region" description="Helical" evidence="2">
    <location>
        <begin position="542"/>
        <end position="562"/>
    </location>
</feature>
<feature type="transmembrane region" description="Helical" evidence="2">
    <location>
        <begin position="585"/>
        <end position="605"/>
    </location>
</feature>
<feature type="transmembrane region" description="Helical" evidence="2">
    <location>
        <begin position="626"/>
        <end position="648"/>
    </location>
</feature>
<feature type="transmembrane region" description="Helical" evidence="2">
    <location>
        <begin position="691"/>
        <end position="711"/>
    </location>
</feature>
<feature type="transmembrane region" description="Helical" evidence="2">
    <location>
        <begin position="724"/>
        <end position="744"/>
    </location>
</feature>
<feature type="glycosylation site" description="N-linked (GlcNAc...) asparagine" evidence="2">
    <location>
        <position position="20"/>
    </location>
</feature>
<feature type="glycosylation site" description="N-linked (GlcNAc...) asparagine" evidence="2">
    <location>
        <position position="209"/>
    </location>
</feature>
<feature type="glycosylation site" description="N-linked (GlcNAc...) asparagine" evidence="2">
    <location>
        <position position="284"/>
    </location>
</feature>
<feature type="glycosylation site" description="N-linked (GlcNAc...) asparagine" evidence="2">
    <location>
        <position position="488"/>
    </location>
</feature>
<feature type="glycosylation site" description="N-linked (GlcNAc...) asparagine" evidence="2">
    <location>
        <position position="520"/>
    </location>
</feature>
<keyword id="KW-0325">Glycoprotein</keyword>
<keyword id="KW-0472">Membrane</keyword>
<keyword id="KW-1185">Reference proteome</keyword>
<keyword id="KW-0812">Transmembrane</keyword>
<keyword id="KW-1133">Transmembrane helix</keyword>
<accession>Q9VAP3</accession>
<sequence length="796" mass="90629">MTESVELMNKYGEPLRYDRNFTGPRQRDRSCTDVPCLLLFVLFLGGWAFIAQYAIRNGDLNKLLVPTDSFNRKCGMDSGVLNKKNLFFFDLNQCIDPLVPITGCDTPQVCVETCPRETFVWDTMKDKQSFAELHSRLICLSEEHKAQIRTKSDIQDAINQNQCARWYIKSAPFLKRCLFEFSQGVCDYIPSFLLNGGRSRRELHMLPGNATTEVQMQADVMYQKMTDAQALVVPQANGKQTPVDEEPIIQCKRRLNEAVIKEKMMQTDTRLAKLVGNMVAHFYNGTNDAQLLGEKIVEDLVNSWSIVLVACFCTLVASLIYIALMRWLSAPILWFSIFGVLIGLLVGIYFSVKQYIHWENTPTVPVHGLNLHSTVKNVLQNQNTWLYLSIFVGVCFVVILLLVIVLRKRIRIAIALTKEGSKAVSSVISTVFFPIFSWILFIAAIAFAIGVGLYLGSIGDPSFRMVRQLTKSGEVTTEDCVCEGPAINYTVGGSCKPEVFQQYCSVRLTSFFQNRNPCLNTTCSFDSINNPIEIKWAIFYNVFGFLWLSFFISAFSYMVLASTFARWYWTFKKRDVPYFTLTRAFFQTAVYHLGTVAFGSLILAIVRLIRLVLEYIHEKLKKYDNAVTRAILCCMRCFFWLLETFLKFLNRNAYIMCAIHGKNFCSSAADSFNLIMRNFLRVVTLDQVTDFLFFLSKLLLTAGAGASTYYFLDNNPSIIRLNYIAVPTTVVVIAAFLITSVFFGVYSTAVDTLFLCFLEDCERNDGSPEKPFFMSKQLMKILGKKNNLPPRQRRGK</sequence>
<dbReference type="EMBL" id="AE014297">
    <property type="protein sequence ID" value="AAF56859.1"/>
    <property type="molecule type" value="Genomic_DNA"/>
</dbReference>
<dbReference type="EMBL" id="AE014297">
    <property type="protein sequence ID" value="AAN14152.1"/>
    <property type="molecule type" value="Genomic_DNA"/>
</dbReference>
<dbReference type="EMBL" id="AE014297">
    <property type="protein sequence ID" value="AAN14153.1"/>
    <property type="molecule type" value="Genomic_DNA"/>
</dbReference>
<dbReference type="RefSeq" id="NP_651670.1">
    <property type="nucleotide sequence ID" value="NM_143413.2"/>
</dbReference>
<dbReference type="RefSeq" id="NP_733268.1">
    <property type="nucleotide sequence ID" value="NM_170389.2"/>
</dbReference>
<dbReference type="RefSeq" id="NP_733269.1">
    <property type="nucleotide sequence ID" value="NM_170390.2"/>
</dbReference>
<dbReference type="SMR" id="Q9VAP3"/>
<dbReference type="BioGRID" id="68311">
    <property type="interactions" value="4"/>
</dbReference>
<dbReference type="FunCoup" id="Q9VAP3">
    <property type="interactions" value="283"/>
</dbReference>
<dbReference type="STRING" id="7227.FBpp0084741"/>
<dbReference type="GlyCosmos" id="Q9VAP3">
    <property type="glycosylation" value="5 sites, No reported glycans"/>
</dbReference>
<dbReference type="GlyGen" id="Q9VAP3">
    <property type="glycosylation" value="5 sites"/>
</dbReference>
<dbReference type="PaxDb" id="7227-FBpp0084740"/>
<dbReference type="DNASU" id="43440"/>
<dbReference type="EnsemblMetazoa" id="FBtr0085371">
    <property type="protein sequence ID" value="FBpp0084740"/>
    <property type="gene ID" value="FBgn0039637"/>
</dbReference>
<dbReference type="EnsemblMetazoa" id="FBtr0085372">
    <property type="protein sequence ID" value="FBpp0084741"/>
    <property type="gene ID" value="FBgn0039637"/>
</dbReference>
<dbReference type="EnsemblMetazoa" id="FBtr0085373">
    <property type="protein sequence ID" value="FBpp0084742"/>
    <property type="gene ID" value="FBgn0039637"/>
</dbReference>
<dbReference type="GeneID" id="43440"/>
<dbReference type="KEGG" id="dme:Dmel_CG11880"/>
<dbReference type="UCSC" id="CG11880-RA">
    <property type="organism name" value="d. melanogaster"/>
</dbReference>
<dbReference type="AGR" id="FB:FBgn0039637"/>
<dbReference type="CTD" id="110281"/>
<dbReference type="FlyBase" id="FBgn0039637">
    <property type="gene designation" value="Ctl2"/>
</dbReference>
<dbReference type="VEuPathDB" id="VectorBase:FBgn0039637"/>
<dbReference type="eggNOG" id="KOG1362">
    <property type="taxonomic scope" value="Eukaryota"/>
</dbReference>
<dbReference type="GeneTree" id="ENSGT00940000172011"/>
<dbReference type="HOGENOM" id="CLU_017181_3_1_1"/>
<dbReference type="InParanoid" id="Q9VAP3"/>
<dbReference type="OMA" id="SQRKCRD"/>
<dbReference type="OrthoDB" id="420519at2759"/>
<dbReference type="PhylomeDB" id="Q9VAP3"/>
<dbReference type="Reactome" id="R-DME-1483191">
    <property type="pathway name" value="Synthesis of PC"/>
</dbReference>
<dbReference type="Reactome" id="R-DME-425366">
    <property type="pathway name" value="Transport of bile salts and organic acids, metal ions and amine compounds"/>
</dbReference>
<dbReference type="Reactome" id="R-DME-6798695">
    <property type="pathway name" value="Neutrophil degranulation"/>
</dbReference>
<dbReference type="BioGRID-ORCS" id="43440">
    <property type="hits" value="0 hits in 3 CRISPR screens"/>
</dbReference>
<dbReference type="GenomeRNAi" id="43440"/>
<dbReference type="PRO" id="PR:Q9VAP3"/>
<dbReference type="Proteomes" id="UP000000803">
    <property type="component" value="Chromosome 3R"/>
</dbReference>
<dbReference type="Bgee" id="FBgn0039637">
    <property type="expression patterns" value="Expressed in adult Malpighian tubule stellate cell of main segment in Malpighian tubule and 185 other cell types or tissues"/>
</dbReference>
<dbReference type="ExpressionAtlas" id="Q9VAP3">
    <property type="expression patterns" value="baseline and differential"/>
</dbReference>
<dbReference type="GO" id="GO:0016020">
    <property type="term" value="C:membrane"/>
    <property type="evidence" value="ECO:0000318"/>
    <property type="project" value="GO_Central"/>
</dbReference>
<dbReference type="GO" id="GO:0022857">
    <property type="term" value="F:transmembrane transporter activity"/>
    <property type="evidence" value="ECO:0000318"/>
    <property type="project" value="GO_Central"/>
</dbReference>
<dbReference type="GO" id="GO:0055085">
    <property type="term" value="P:transmembrane transport"/>
    <property type="evidence" value="ECO:0000318"/>
    <property type="project" value="GO_Central"/>
</dbReference>
<dbReference type="InterPro" id="IPR007603">
    <property type="entry name" value="Choline_transptr-like"/>
</dbReference>
<dbReference type="PANTHER" id="PTHR12385">
    <property type="entry name" value="CHOLINE TRANSPORTER-LIKE (SLC FAMILY 44)"/>
    <property type="match status" value="1"/>
</dbReference>
<dbReference type="PANTHER" id="PTHR12385:SF14">
    <property type="entry name" value="CHOLINE TRANSPORTER-LIKE 2"/>
    <property type="match status" value="1"/>
</dbReference>
<dbReference type="Pfam" id="PF04515">
    <property type="entry name" value="Choline_transpo"/>
    <property type="match status" value="1"/>
</dbReference>
<organism>
    <name type="scientific">Drosophila melanogaster</name>
    <name type="common">Fruit fly</name>
    <dbReference type="NCBI Taxonomy" id="7227"/>
    <lineage>
        <taxon>Eukaryota</taxon>
        <taxon>Metazoa</taxon>
        <taxon>Ecdysozoa</taxon>
        <taxon>Arthropoda</taxon>
        <taxon>Hexapoda</taxon>
        <taxon>Insecta</taxon>
        <taxon>Pterygota</taxon>
        <taxon>Neoptera</taxon>
        <taxon>Endopterygota</taxon>
        <taxon>Diptera</taxon>
        <taxon>Brachycera</taxon>
        <taxon>Muscomorpha</taxon>
        <taxon>Ephydroidea</taxon>
        <taxon>Drosophilidae</taxon>
        <taxon>Drosophila</taxon>
        <taxon>Sophophora</taxon>
    </lineage>
</organism>
<name>CTL12_DROME</name>
<evidence type="ECO:0000250" key="1"/>
<evidence type="ECO:0000255" key="2"/>
<evidence type="ECO:0000305" key="3"/>
<evidence type="ECO:0000312" key="4">
    <source>
        <dbReference type="FlyBase" id="FBgn0039637"/>
    </source>
</evidence>
<reference key="1">
    <citation type="journal article" date="2000" name="Science">
        <title>The genome sequence of Drosophila melanogaster.</title>
        <authorList>
            <person name="Adams M.D."/>
            <person name="Celniker S.E."/>
            <person name="Holt R.A."/>
            <person name="Evans C.A."/>
            <person name="Gocayne J.D."/>
            <person name="Amanatides P.G."/>
            <person name="Scherer S.E."/>
            <person name="Li P.W."/>
            <person name="Hoskins R.A."/>
            <person name="Galle R.F."/>
            <person name="George R.A."/>
            <person name="Lewis S.E."/>
            <person name="Richards S."/>
            <person name="Ashburner M."/>
            <person name="Henderson S.N."/>
            <person name="Sutton G.G."/>
            <person name="Wortman J.R."/>
            <person name="Yandell M.D."/>
            <person name="Zhang Q."/>
            <person name="Chen L.X."/>
            <person name="Brandon R.C."/>
            <person name="Rogers Y.-H.C."/>
            <person name="Blazej R.G."/>
            <person name="Champe M."/>
            <person name="Pfeiffer B.D."/>
            <person name="Wan K.H."/>
            <person name="Doyle C."/>
            <person name="Baxter E.G."/>
            <person name="Helt G."/>
            <person name="Nelson C.R."/>
            <person name="Miklos G.L.G."/>
            <person name="Abril J.F."/>
            <person name="Agbayani A."/>
            <person name="An H.-J."/>
            <person name="Andrews-Pfannkoch C."/>
            <person name="Baldwin D."/>
            <person name="Ballew R.M."/>
            <person name="Basu A."/>
            <person name="Baxendale J."/>
            <person name="Bayraktaroglu L."/>
            <person name="Beasley E.M."/>
            <person name="Beeson K.Y."/>
            <person name="Benos P.V."/>
            <person name="Berman B.P."/>
            <person name="Bhandari D."/>
            <person name="Bolshakov S."/>
            <person name="Borkova D."/>
            <person name="Botchan M.R."/>
            <person name="Bouck J."/>
            <person name="Brokstein P."/>
            <person name="Brottier P."/>
            <person name="Burtis K.C."/>
            <person name="Busam D.A."/>
            <person name="Butler H."/>
            <person name="Cadieu E."/>
            <person name="Center A."/>
            <person name="Chandra I."/>
            <person name="Cherry J.M."/>
            <person name="Cawley S."/>
            <person name="Dahlke C."/>
            <person name="Davenport L.B."/>
            <person name="Davies P."/>
            <person name="de Pablos B."/>
            <person name="Delcher A."/>
            <person name="Deng Z."/>
            <person name="Mays A.D."/>
            <person name="Dew I."/>
            <person name="Dietz S.M."/>
            <person name="Dodson K."/>
            <person name="Doup L.E."/>
            <person name="Downes M."/>
            <person name="Dugan-Rocha S."/>
            <person name="Dunkov B.C."/>
            <person name="Dunn P."/>
            <person name="Durbin K.J."/>
            <person name="Evangelista C.C."/>
            <person name="Ferraz C."/>
            <person name="Ferriera S."/>
            <person name="Fleischmann W."/>
            <person name="Fosler C."/>
            <person name="Gabrielian A.E."/>
            <person name="Garg N.S."/>
            <person name="Gelbart W.M."/>
            <person name="Glasser K."/>
            <person name="Glodek A."/>
            <person name="Gong F."/>
            <person name="Gorrell J.H."/>
            <person name="Gu Z."/>
            <person name="Guan P."/>
            <person name="Harris M."/>
            <person name="Harris N.L."/>
            <person name="Harvey D.A."/>
            <person name="Heiman T.J."/>
            <person name="Hernandez J.R."/>
            <person name="Houck J."/>
            <person name="Hostin D."/>
            <person name="Houston K.A."/>
            <person name="Howland T.J."/>
            <person name="Wei M.-H."/>
            <person name="Ibegwam C."/>
            <person name="Jalali M."/>
            <person name="Kalush F."/>
            <person name="Karpen G.H."/>
            <person name="Ke Z."/>
            <person name="Kennison J.A."/>
            <person name="Ketchum K.A."/>
            <person name="Kimmel B.E."/>
            <person name="Kodira C.D."/>
            <person name="Kraft C.L."/>
            <person name="Kravitz S."/>
            <person name="Kulp D."/>
            <person name="Lai Z."/>
            <person name="Lasko P."/>
            <person name="Lei Y."/>
            <person name="Levitsky A.A."/>
            <person name="Li J.H."/>
            <person name="Li Z."/>
            <person name="Liang Y."/>
            <person name="Lin X."/>
            <person name="Liu X."/>
            <person name="Mattei B."/>
            <person name="McIntosh T.C."/>
            <person name="McLeod M.P."/>
            <person name="McPherson D."/>
            <person name="Merkulov G."/>
            <person name="Milshina N.V."/>
            <person name="Mobarry C."/>
            <person name="Morris J."/>
            <person name="Moshrefi A."/>
            <person name="Mount S.M."/>
            <person name="Moy M."/>
            <person name="Murphy B."/>
            <person name="Murphy L."/>
            <person name="Muzny D.M."/>
            <person name="Nelson D.L."/>
            <person name="Nelson D.R."/>
            <person name="Nelson K.A."/>
            <person name="Nixon K."/>
            <person name="Nusskern D.R."/>
            <person name="Pacleb J.M."/>
            <person name="Palazzolo M."/>
            <person name="Pittman G.S."/>
            <person name="Pan S."/>
            <person name="Pollard J."/>
            <person name="Puri V."/>
            <person name="Reese M.G."/>
            <person name="Reinert K."/>
            <person name="Remington K."/>
            <person name="Saunders R.D.C."/>
            <person name="Scheeler F."/>
            <person name="Shen H."/>
            <person name="Shue B.C."/>
            <person name="Siden-Kiamos I."/>
            <person name="Simpson M."/>
            <person name="Skupski M.P."/>
            <person name="Smith T.J."/>
            <person name="Spier E."/>
            <person name="Spradling A.C."/>
            <person name="Stapleton M."/>
            <person name="Strong R."/>
            <person name="Sun E."/>
            <person name="Svirskas R."/>
            <person name="Tector C."/>
            <person name="Turner R."/>
            <person name="Venter E."/>
            <person name="Wang A.H."/>
            <person name="Wang X."/>
            <person name="Wang Z.-Y."/>
            <person name="Wassarman D.A."/>
            <person name="Weinstock G.M."/>
            <person name="Weissenbach J."/>
            <person name="Williams S.M."/>
            <person name="Woodage T."/>
            <person name="Worley K.C."/>
            <person name="Wu D."/>
            <person name="Yang S."/>
            <person name="Yao Q.A."/>
            <person name="Ye J."/>
            <person name="Yeh R.-F."/>
            <person name="Zaveri J.S."/>
            <person name="Zhan M."/>
            <person name="Zhang G."/>
            <person name="Zhao Q."/>
            <person name="Zheng L."/>
            <person name="Zheng X.H."/>
            <person name="Zhong F.N."/>
            <person name="Zhong W."/>
            <person name="Zhou X."/>
            <person name="Zhu S.C."/>
            <person name="Zhu X."/>
            <person name="Smith H.O."/>
            <person name="Gibbs R.A."/>
            <person name="Myers E.W."/>
            <person name="Rubin G.M."/>
            <person name="Venter J.C."/>
        </authorList>
    </citation>
    <scope>NUCLEOTIDE SEQUENCE [LARGE SCALE GENOMIC DNA]</scope>
    <source>
        <strain>Berkeley</strain>
    </source>
</reference>
<reference key="2">
    <citation type="journal article" date="2002" name="Genome Biol.">
        <title>Annotation of the Drosophila melanogaster euchromatic genome: a systematic review.</title>
        <authorList>
            <person name="Misra S."/>
            <person name="Crosby M.A."/>
            <person name="Mungall C.J."/>
            <person name="Matthews B.B."/>
            <person name="Campbell K.S."/>
            <person name="Hradecky P."/>
            <person name="Huang Y."/>
            <person name="Kaminker J.S."/>
            <person name="Millburn G.H."/>
            <person name="Prochnik S.E."/>
            <person name="Smith C.D."/>
            <person name="Tupy J.L."/>
            <person name="Whitfield E.J."/>
            <person name="Bayraktaroglu L."/>
            <person name="Berman B.P."/>
            <person name="Bettencourt B.R."/>
            <person name="Celniker S.E."/>
            <person name="de Grey A.D.N.J."/>
            <person name="Drysdale R.A."/>
            <person name="Harris N.L."/>
            <person name="Richter J."/>
            <person name="Russo S."/>
            <person name="Schroeder A.J."/>
            <person name="Shu S.Q."/>
            <person name="Stapleton M."/>
            <person name="Yamada C."/>
            <person name="Ashburner M."/>
            <person name="Gelbart W.M."/>
            <person name="Rubin G.M."/>
            <person name="Lewis S.E."/>
        </authorList>
    </citation>
    <scope>GENOME REANNOTATION</scope>
    <source>
        <strain>Berkeley</strain>
    </source>
</reference>
<proteinExistence type="inferred from homology"/>